<accession>A0A0A8IDB7</accession>
<comment type="function">
    <text evidence="6 7 8 9">Pyrroloquinoline quinone (PPQ)-dependent oxidoreductase that catalyzes the oxidation of various sugars including L-galactose, L-gulose, D-talose, D-arabinose, D-lyxose, L-fucose and D-glucosone (PubMed:25121592, PubMed:25679509, PubMed:27338639). Shows significant activity toward the reverse-chair conformation of pyranoses (PubMed:25679509). Shows little or no activity toward abundant sugars such as D-glucose, D-fructose, cellobiose, as well L-xylose and L-glucose (PubMed:25121592, PubMed:25679509). This enzyme is able to direct electrical communication with electrodes, without artificial electron mediators, thus allowing direct electron transfer (DET)-type bioelectrocatalysis (PubMed:27338639). Exhibits binding affinity for insoluble cellulose (PubMed:25679509). PDH does not oxidize cello-oligosaccharides but is able to activate the C-1-oxidizing Neurospora crassa LPMO9F and the C-4-oxidizing Neurospora crassa LPMO9C thanks to the electron-tranfer activity of the cytochrome domain and the localization of PDH in the vicinity of the LPMO substrates by the CBM1 domain (PubMed:29602785).</text>
</comment>
<comment type="cofactor">
    <cofactor evidence="6">
        <name>Ca(2+)</name>
        <dbReference type="ChEBI" id="CHEBI:29108"/>
    </cofactor>
</comment>
<comment type="cofactor">
    <cofactor evidence="6">
        <name>pyrroloquinoline quinone</name>
        <dbReference type="ChEBI" id="CHEBI:58442"/>
    </cofactor>
</comment>
<comment type="cofactor">
    <cofactor evidence="1">
        <name>heme b</name>
        <dbReference type="ChEBI" id="CHEBI:60344"/>
    </cofactor>
</comment>
<comment type="biophysicochemical properties">
    <kinetics>
        <KM evidence="6 7">7.9 mM for D-glucosone</KM>
        <KM evidence="6 7">24.8 mM for L-fucose</KM>
        <KM evidence="6 7">30.3 mM for D-arabinose</KM>
        <KM evidence="6 7">84.7 mM for L-gulose</KM>
        <KM evidence="6 7">66.8 mM for D-lyxose</KM>
        <KM evidence="7">49.7 mM for L-galactose</KM>
        <KM evidence="7">23.1 mM for D-talose</KM>
        <KM evidence="7">236 mM for L-xylose</KM>
        <KM evidence="7">363 mM for L-glucose</KM>
        <KM evidence="8">3.3 mM for cytochrome c reduction at pH 6.0</KM>
        <KM evidence="8">6.1 mM for cytochrome c reduction at pH 8.5</KM>
    </kinetics>
    <phDependence>
        <text evidence="8">Optimum pH is 6.5 for phenazine methosulfate reduction and 8.5 for cytochrome c reduction.</text>
    </phDependence>
</comment>
<comment type="subcellular location">
    <subcellularLocation>
        <location evidence="6">Secreted</location>
    </subcellularLocation>
</comment>
<comment type="domain">
    <text evidence="14">PDH consists of three domains: an N-terminal cytochrome domain (found in AA8 family enzymes), a PQQ-dependent dehydrogenase domain in the middle of the sequence, and a C-terminal cellulose-binding domain classified as a member of the family 1 carbohydrate-binding module (CBM1).</text>
</comment>
<comment type="domain">
    <text evidence="7 8 9">The N-terminal cytochrome domain has an electron transfer function, i.e., intra- and inter-molecular electron transfer between the cytochrome domain and the catalytic domain and also Fe (III)-reducing ability (PubMed:25679509, PubMed:27338639). This function is essential to activate lytic polysaccharide monooxygenases (LPMOs) at the cell wall (PubMed:29602785).</text>
</comment>
<comment type="domain">
    <text evidence="9">The CBM1 domain binds cellulose and is essential to localize the electron transfer activity in the vicinity of the substrate of lytic polysaccharide monooxygenases (LPMOs) to activate them.</text>
</comment>
<comment type="biotechnology">
    <text evidence="7 10">AA12 family proteins are an attractive component of cellulolytic enzymes for use in biodegradation and biomass conversion or as an anode catalyst for bioelectrochemical applications (PubMed:25679509). Moreover, direct electron transfer (DET)-type bioelectrocatalysis of the PQQ domain from PDH has been used to create an amperometric L-fucose biosensor for the screening test of cancer using urine (PubMed:33288426).</text>
</comment>
<comment type="similarity">
    <text evidence="13">Belongs to the sugar dehydrogenase AA12 family.</text>
</comment>
<evidence type="ECO:0000250" key="1">
    <source>
        <dbReference type="UniProtKB" id="A8P0V4"/>
    </source>
</evidence>
<evidence type="ECO:0000255" key="2"/>
<evidence type="ECO:0000255" key="3">
    <source>
        <dbReference type="PROSITE-ProRule" id="PRU00498"/>
    </source>
</evidence>
<evidence type="ECO:0000255" key="4">
    <source>
        <dbReference type="PROSITE-ProRule" id="PRU00597"/>
    </source>
</evidence>
<evidence type="ECO:0000256" key="5">
    <source>
        <dbReference type="SAM" id="MobiDB-lite"/>
    </source>
</evidence>
<evidence type="ECO:0000269" key="6">
    <source>
    </source>
</evidence>
<evidence type="ECO:0000269" key="7">
    <source>
    </source>
</evidence>
<evidence type="ECO:0000269" key="8">
    <source>
    </source>
</evidence>
<evidence type="ECO:0000269" key="9">
    <source>
    </source>
</evidence>
<evidence type="ECO:0000269" key="10">
    <source>
    </source>
</evidence>
<evidence type="ECO:0000303" key="11">
    <source>
    </source>
</evidence>
<evidence type="ECO:0000303" key="12">
    <source>
    </source>
</evidence>
<evidence type="ECO:0000305" key="13"/>
<evidence type="ECO:0000305" key="14">
    <source>
    </source>
</evidence>
<protein>
    <recommendedName>
        <fullName evidence="12">Pyrroloquinoline quinone-dependent pyranose dehydrogenase</fullName>
        <shortName evidence="12">PDH</shortName>
        <ecNumber evidence="6">1.1.99.-</ecNumber>
    </recommendedName>
    <alternativeName>
        <fullName evidence="12">AA12 family sugar dehydrogenase</fullName>
    </alternativeName>
    <alternativeName>
        <fullName evidence="11">Pyrroloquinoline quinone-dependent sugar dehydrogenase</fullName>
        <shortName evidence="11">SDH</shortName>
    </alternativeName>
</protein>
<sequence>MRSSSLAWALGLVALANAQGSPTQWYDSITGVTFSRFYQQDTDASWGYIFPSASGGQAPDEFIGLFQGPASAGWIGNSLGGSMRNNPLLVGWVDGSTPRISARWATDYAPPSIYSGPRLTILGSSGTNGNIQRIVYRCQNCTRWTGGAGGIPTTGSAVFGWAFHSTTKPLTPSDPSSGLYRHSHAAQYGFDIGNARTTLYDYYLQQLTNAPPLSGGAPTQPPTQQPPTTTAPPPPPPSSTFVSCPGAPQPRYQMNVANGFRVAPVLGGLTMPRGITLDTRGNLLVVERGRGLTGHTLDANGCVTSSKVVIQDTQINHGIDVHPSGRRIIASSGDIAWSWDYDPATMTATNRRTLVTGMNNFYHFTRTVHISRKYPNLFALNVGSDGNIDVPTRQQNSGRAQIRVFDYDQLPQNGVPFVSQYGRVLGYGLRNDVGITEDRAGNIHSIENSLDNAYRMVNGQRRDIHTNNPAEKVYNLGDPSNPRAIFGGYPDCYTVWEPSDFTDSPKQPGDWFTQDNSGQYTDAWCNANAVKPTLLLPPHTAPLDMKFGLGNDTNLYVALHGSWNRQPPQGYKVVVVPGQYSASGEWSPTAPLAQSRTAWSDLLTNRNENQCSGFGNANCFRPVGLVWSADGQNLYVSSDTSGEVFIIKRMSGPIVQPPITQPPITTSPPTPTTPPVVQPPTTVAPPQASQTLWGQCGGQGWTGPTLCPANSVCRESNQWYSQCVPA</sequence>
<gene>
    <name evidence="12" type="primary">PDH</name>
    <name evidence="11" type="synonym">SDH</name>
</gene>
<organism>
    <name type="scientific">Coprinopsis cinerea</name>
    <name type="common">Inky cap fungus</name>
    <name type="synonym">Hormographiella aspergillata</name>
    <dbReference type="NCBI Taxonomy" id="5346"/>
    <lineage>
        <taxon>Eukaryota</taxon>
        <taxon>Fungi</taxon>
        <taxon>Dikarya</taxon>
        <taxon>Basidiomycota</taxon>
        <taxon>Agaricomycotina</taxon>
        <taxon>Agaricomycetes</taxon>
        <taxon>Agaricomycetidae</taxon>
        <taxon>Agaricales</taxon>
        <taxon>Agaricineae</taxon>
        <taxon>Psathyrellaceae</taxon>
        <taxon>Coprinopsis</taxon>
    </lineage>
</organism>
<dbReference type="EC" id="1.1.99.-" evidence="6"/>
<dbReference type="EMBL" id="AB901366">
    <property type="protein sequence ID" value="BAP91034.1"/>
    <property type="molecule type" value="mRNA"/>
</dbReference>
<dbReference type="SMR" id="A0A0A8IDB7"/>
<dbReference type="VEuPathDB" id="FungiDB:CC1G_09525"/>
<dbReference type="VEuPathDB" id="FungiDB:CC2G_014691"/>
<dbReference type="OMA" id="THWTVNA"/>
<dbReference type="GO" id="GO:0005576">
    <property type="term" value="C:extracellular region"/>
    <property type="evidence" value="ECO:0007669"/>
    <property type="project" value="UniProtKB-SubCell"/>
</dbReference>
<dbReference type="GO" id="GO:0030248">
    <property type="term" value="F:cellulose binding"/>
    <property type="evidence" value="ECO:0007669"/>
    <property type="project" value="InterPro"/>
</dbReference>
<dbReference type="GO" id="GO:0046872">
    <property type="term" value="F:metal ion binding"/>
    <property type="evidence" value="ECO:0007669"/>
    <property type="project" value="UniProtKB-KW"/>
</dbReference>
<dbReference type="GO" id="GO:0016491">
    <property type="term" value="F:oxidoreductase activity"/>
    <property type="evidence" value="ECO:0007669"/>
    <property type="project" value="UniProtKB-KW"/>
</dbReference>
<dbReference type="GO" id="GO:0005975">
    <property type="term" value="P:carbohydrate metabolic process"/>
    <property type="evidence" value="ECO:0007669"/>
    <property type="project" value="InterPro"/>
</dbReference>
<dbReference type="CDD" id="cd09630">
    <property type="entry name" value="CDH_like_cytochrome"/>
    <property type="match status" value="1"/>
</dbReference>
<dbReference type="Gene3D" id="2.60.40.1210">
    <property type="entry name" value="Cellobiose dehydrogenase, cytochrome domain"/>
    <property type="match status" value="1"/>
</dbReference>
<dbReference type="Gene3D" id="2.120.10.30">
    <property type="entry name" value="TolB, C-terminal domain"/>
    <property type="match status" value="1"/>
</dbReference>
<dbReference type="InterPro" id="IPR011042">
    <property type="entry name" value="6-blade_b-propeller_TolB-like"/>
</dbReference>
<dbReference type="InterPro" id="IPR035971">
    <property type="entry name" value="CBD_sf"/>
</dbReference>
<dbReference type="InterPro" id="IPR015920">
    <property type="entry name" value="Cellobiose_DH-like_cyt"/>
</dbReference>
<dbReference type="InterPro" id="IPR000254">
    <property type="entry name" value="Cellulose-bd_dom_fun"/>
</dbReference>
<dbReference type="InterPro" id="IPR005018">
    <property type="entry name" value="DOMON_domain"/>
</dbReference>
<dbReference type="InterPro" id="IPR054539">
    <property type="entry name" value="PDH_beta-prop"/>
</dbReference>
<dbReference type="InterPro" id="IPR011041">
    <property type="entry name" value="Quinoprot_gluc/sorb_DH_b-prop"/>
</dbReference>
<dbReference type="PANTHER" id="PTHR47797:SF5">
    <property type="entry name" value="CELLOBIOSE DEHYDROGENASE CYTOCHROME DOMAIN-CONTAINING PROTEIN"/>
    <property type="match status" value="1"/>
</dbReference>
<dbReference type="PANTHER" id="PTHR47797">
    <property type="entry name" value="DEHYDROGENASE, PUTATIVE (AFU_ORTHOLOGUE AFUA_8G05805)-RELATED"/>
    <property type="match status" value="1"/>
</dbReference>
<dbReference type="Pfam" id="PF00734">
    <property type="entry name" value="CBM_1"/>
    <property type="match status" value="1"/>
</dbReference>
<dbReference type="Pfam" id="PF16010">
    <property type="entry name" value="CDH-cyt"/>
    <property type="match status" value="1"/>
</dbReference>
<dbReference type="Pfam" id="PF22807">
    <property type="entry name" value="TrAA12"/>
    <property type="match status" value="1"/>
</dbReference>
<dbReference type="SMART" id="SM00664">
    <property type="entry name" value="DoH"/>
    <property type="match status" value="1"/>
</dbReference>
<dbReference type="SMART" id="SM00236">
    <property type="entry name" value="fCBD"/>
    <property type="match status" value="1"/>
</dbReference>
<dbReference type="SUPFAM" id="SSF49344">
    <property type="entry name" value="CBD9-like"/>
    <property type="match status" value="1"/>
</dbReference>
<dbReference type="SUPFAM" id="SSF57180">
    <property type="entry name" value="Cellulose-binding domain"/>
    <property type="match status" value="1"/>
</dbReference>
<dbReference type="SUPFAM" id="SSF50952">
    <property type="entry name" value="Soluble quinoprotein glucose dehydrogenase"/>
    <property type="match status" value="1"/>
</dbReference>
<dbReference type="PROSITE" id="PS00562">
    <property type="entry name" value="CBM1_1"/>
    <property type="match status" value="1"/>
</dbReference>
<dbReference type="PROSITE" id="PS51164">
    <property type="entry name" value="CBM1_2"/>
    <property type="match status" value="1"/>
</dbReference>
<keyword id="KW-0106">Calcium</keyword>
<keyword id="KW-1015">Disulfide bond</keyword>
<keyword id="KW-0325">Glycoprotein</keyword>
<keyword id="KW-0349">Heme</keyword>
<keyword id="KW-0408">Iron</keyword>
<keyword id="KW-0479">Metal-binding</keyword>
<keyword id="KW-0560">Oxidoreductase</keyword>
<keyword id="KW-0964">Secreted</keyword>
<keyword id="KW-0732">Signal</keyword>
<proteinExistence type="evidence at protein level"/>
<reference key="1">
    <citation type="journal article" date="2014" name="PLoS ONE">
        <title>Discovery of a eukaryotic pyrroloquinoline quinone-dependent oxidoreductase belonging to a new auxiliary activity family in the database of carbohydrate-active enzymes.</title>
        <authorList>
            <person name="Matsumura H."/>
            <person name="Umezawa K."/>
            <person name="Takeda K."/>
            <person name="Sugimoto N."/>
            <person name="Ishida T."/>
            <person name="Samejima M."/>
            <person name="Ohno H."/>
            <person name="Yoshida M."/>
            <person name="Igarashi K."/>
            <person name="Nakamura N."/>
        </authorList>
    </citation>
    <scope>NUCLEOTIDE SEQUENCE [MRNA]</scope>
    <scope>FUNCTION</scope>
    <scope>SUBCELLULAR LOCATION</scope>
    <scope>CATALYTIC ACTIVITY</scope>
    <scope>BIOPHYSICOCHEMICAL PROPERTIES</scope>
    <scope>SUBSTRATE SPECIFICITY</scope>
    <scope>COFACTOR</scope>
    <source>
        <strain>5338</strain>
    </source>
</reference>
<reference key="2">
    <citation type="journal article" date="2015" name="PLoS ONE">
        <title>Characterization of a novel PQQ-dependent quinohemoprotein pyranose dehydrogenase from Coprinopsis cinerea classified into auxiliary activities family 12 in carbohydrate-active enzymes.</title>
        <authorList>
            <person name="Takeda K."/>
            <person name="Matsumura H."/>
            <person name="Ishida T."/>
            <person name="Samejima M."/>
            <person name="Ohno H."/>
            <person name="Yoshida M."/>
            <person name="Igarashi K."/>
            <person name="Nakamura N."/>
        </authorList>
    </citation>
    <scope>FUNCTION</scope>
    <scope>CATALYTIC ACTIVITY</scope>
    <scope>BIOPHYSICOCHEMICAL PROPERTIES</scope>
    <scope>SUBSTRATE SPECIFICITY</scope>
    <scope>DOMAIN</scope>
    <scope>BIOTECHNOLOGY</scope>
</reference>
<reference key="3">
    <citation type="journal article" date="2016" name="Biochem. Biophys. Res. Commun.">
        <title>pH-dependent electron transfer reaction and direct bioelectrocatalysis of the quinohemoprotein pyranose dehydrogenase.</title>
        <authorList>
            <person name="Takeda K."/>
            <person name="Matsumura H."/>
            <person name="Ishida T."/>
            <person name="Yoshida M."/>
            <person name="Igarashi K."/>
            <person name="Samejima M."/>
            <person name="Ohno H."/>
            <person name="Nakamura N."/>
        </authorList>
    </citation>
    <scope>FUNCTION</scope>
    <scope>CATALYTIC ACTIVITY</scope>
    <scope>BIOPHYSICOCHEMICAL PROPERTIES</scope>
    <scope>DOMAIN</scope>
</reference>
<reference key="4">
    <citation type="journal article" date="2018" name="Appl. Environ. Microbiol.">
        <title>The pyrroloquinoline-quinone-dependent p0yranose dehydrogenase from Coprinopsis cinerea drives lytic polysaccharide monooxygenase action.</title>
        <authorList>
            <person name="Varnai A."/>
            <person name="Umezawa K."/>
            <person name="Yoshida M."/>
            <person name="Eijsink V.G.H."/>
        </authorList>
    </citation>
    <scope>FUNCTION</scope>
    <scope>DOMAIN</scope>
</reference>
<reference key="5">
    <citation type="journal article" date="2021" name="Biosens. Bioelectron.">
        <title>An amperometric biosensor of L-fucose in urine for the first screening test of cancer.</title>
        <authorList>
            <person name="Takeda K."/>
            <person name="Kusuoka R."/>
            <person name="Inukai M."/>
            <person name="Igarashi K."/>
            <person name="Ohno H."/>
            <person name="Nakamura N."/>
        </authorList>
    </citation>
    <scope>BIOTECHNOLOGY</scope>
</reference>
<feature type="signal peptide" evidence="2">
    <location>
        <begin position="1"/>
        <end position="18"/>
    </location>
</feature>
<feature type="chain" id="PRO_5002037469" description="Pyrroloquinoline quinone-dependent pyranose dehydrogenase">
    <location>
        <begin position="19"/>
        <end position="726"/>
    </location>
</feature>
<feature type="domain" description="CBM1" evidence="4">
    <location>
        <begin position="688"/>
        <end position="724"/>
    </location>
</feature>
<feature type="region of interest" description="Disordered" evidence="5">
    <location>
        <begin position="211"/>
        <end position="242"/>
    </location>
</feature>
<feature type="region of interest" description="Disordered" evidence="5">
    <location>
        <begin position="659"/>
        <end position="689"/>
    </location>
</feature>
<feature type="compositionally biased region" description="Pro residues" evidence="5">
    <location>
        <begin position="219"/>
        <end position="238"/>
    </location>
</feature>
<feature type="compositionally biased region" description="Pro residues" evidence="5">
    <location>
        <begin position="659"/>
        <end position="678"/>
    </location>
</feature>
<feature type="compositionally biased region" description="Low complexity" evidence="5">
    <location>
        <begin position="679"/>
        <end position="689"/>
    </location>
</feature>
<feature type="binding site" description="axial binding residue" evidence="1">
    <location>
        <position position="83"/>
    </location>
    <ligand>
        <name>heme b</name>
        <dbReference type="ChEBI" id="CHEBI:60344"/>
    </ligand>
    <ligandPart>
        <name>Fe</name>
        <dbReference type="ChEBI" id="CHEBI:18248"/>
    </ligandPart>
</feature>
<feature type="binding site" evidence="1">
    <location>
        <position position="108"/>
    </location>
    <ligand>
        <name>heme b</name>
        <dbReference type="ChEBI" id="CHEBI:60344"/>
    </ligand>
</feature>
<feature type="binding site" evidence="1">
    <location>
        <position position="181"/>
    </location>
    <ligand>
        <name>heme b</name>
        <dbReference type="ChEBI" id="CHEBI:60344"/>
    </ligand>
</feature>
<feature type="binding site" description="axial binding residue" evidence="1">
    <location>
        <position position="182"/>
    </location>
    <ligand>
        <name>heme b</name>
        <dbReference type="ChEBI" id="CHEBI:60344"/>
    </ligand>
    <ligandPart>
        <name>Fe</name>
        <dbReference type="ChEBI" id="CHEBI:18248"/>
    </ligandPart>
</feature>
<feature type="binding site" evidence="1">
    <location>
        <position position="273"/>
    </location>
    <ligand>
        <name>pyrroloquinoline quinone</name>
        <dbReference type="ChEBI" id="CHEBI:58442"/>
    </ligand>
</feature>
<feature type="binding site" evidence="1">
    <location>
        <position position="363"/>
    </location>
    <ligand>
        <name>pyrroloquinoline quinone</name>
        <dbReference type="ChEBI" id="CHEBI:58442"/>
    </ligand>
</feature>
<feature type="binding site" evidence="1">
    <location>
        <position position="430"/>
    </location>
    <ligand>
        <name>pyrroloquinoline quinone</name>
        <dbReference type="ChEBI" id="CHEBI:58442"/>
    </ligand>
</feature>
<feature type="binding site" evidence="1">
    <location>
        <position position="431"/>
    </location>
    <ligand>
        <name>pyrroloquinoline quinone</name>
        <dbReference type="ChEBI" id="CHEBI:58442"/>
    </ligand>
</feature>
<feature type="binding site" evidence="1">
    <location>
        <position position="449"/>
    </location>
    <ligand>
        <name>Ca(2+)</name>
        <dbReference type="ChEBI" id="CHEBI:29108"/>
    </ligand>
</feature>
<feature type="binding site" evidence="1">
    <location>
        <position position="451"/>
    </location>
    <ligand>
        <name>Ca(2+)</name>
        <dbReference type="ChEBI" id="CHEBI:29108"/>
    </ligand>
</feature>
<feature type="binding site" evidence="1">
    <location>
        <position position="539"/>
    </location>
    <ligand>
        <name>pyrroloquinoline quinone</name>
        <dbReference type="ChEBI" id="CHEBI:58442"/>
    </ligand>
</feature>
<feature type="binding site" evidence="1">
    <location>
        <position position="560"/>
    </location>
    <ligand>
        <name>pyrroloquinoline quinone</name>
        <dbReference type="ChEBI" id="CHEBI:58442"/>
    </ligand>
</feature>
<feature type="binding site" evidence="1">
    <location>
        <position position="563"/>
    </location>
    <ligand>
        <name>pyrroloquinoline quinone</name>
        <dbReference type="ChEBI" id="CHEBI:58442"/>
    </ligand>
</feature>
<feature type="binding site" evidence="1">
    <location>
        <position position="564"/>
    </location>
    <ligand>
        <name>pyrroloquinoline quinone</name>
        <dbReference type="ChEBI" id="CHEBI:58442"/>
    </ligand>
</feature>
<feature type="binding site" evidence="1">
    <location>
        <position position="621"/>
    </location>
    <ligand>
        <name>pyrroloquinoline quinone</name>
        <dbReference type="ChEBI" id="CHEBI:58442"/>
    </ligand>
</feature>
<feature type="glycosylation site" description="N-linked (GlcNAc...) asparagine" evidence="3">
    <location>
        <position position="140"/>
    </location>
</feature>
<feature type="glycosylation site" description="N-linked (GlcNAc...) asparagine" evidence="3">
    <location>
        <position position="551"/>
    </location>
</feature>
<feature type="disulfide bond" evidence="1">
    <location>
        <begin position="138"/>
        <end position="141"/>
    </location>
</feature>
<feature type="disulfide bond" evidence="1">
    <location>
        <begin position="244"/>
        <end position="302"/>
    </location>
</feature>
<feature type="disulfide bond" evidence="1">
    <location>
        <begin position="492"/>
        <end position="525"/>
    </location>
</feature>
<feature type="disulfide bond" evidence="1">
    <location>
        <begin position="611"/>
        <end position="619"/>
    </location>
</feature>
<name>AA12_COPCI</name>